<proteinExistence type="evidence at protein level"/>
<feature type="chain" id="PRO_0000453142" description="Sensor histidine kinase Hik34">
    <location>
        <begin position="1"/>
        <end position="464"/>
    </location>
</feature>
<feature type="domain" description="Histidine kinase" evidence="1">
    <location>
        <begin position="235"/>
        <end position="449"/>
    </location>
</feature>
<feature type="modified residue" description="Phosphohistidine; by autocatalysis" evidence="1">
    <location>
        <position position="238"/>
    </location>
</feature>
<keyword id="KW-0418">Kinase</keyword>
<keyword id="KW-0597">Phosphoprotein</keyword>
<keyword id="KW-1185">Reference proteome</keyword>
<keyword id="KW-0346">Stress response</keyword>
<keyword id="KW-0808">Transferase</keyword>
<keyword id="KW-0902">Two-component regulatory system</keyword>
<evidence type="ECO:0000255" key="1">
    <source>
        <dbReference type="PROSITE-ProRule" id="PRU00107"/>
    </source>
</evidence>
<evidence type="ECO:0000269" key="2">
    <source>
    </source>
</evidence>
<evidence type="ECO:0000269" key="3">
    <source>
    </source>
</evidence>
<evidence type="ECO:0000269" key="4">
    <source>
    </source>
</evidence>
<evidence type="ECO:0000269" key="5">
    <source>
    </source>
</evidence>
<evidence type="ECO:0000269" key="6">
    <source>
    </source>
</evidence>
<evidence type="ECO:0000303" key="7">
    <source>
    </source>
</evidence>
<evidence type="ECO:0000312" key="8">
    <source>
        <dbReference type="EMBL" id="BAA18290.1"/>
    </source>
</evidence>
<sequence length="464" mass="52623">MNEVCLKLSDLFVSSGWGGYDRGRAPQWAHPRAQQQWFGAIAALEPFLRQTLPNVGGELPGICLTGPAPVLKDAVLVRNFYQGIATPWEEFSPWPCLAGEESEWSAVPPMREIPLFPQDPLAEEQFCWLMTPQFGLLLLLGKNEQGLAQFYWTFDPEILQQAWLSLQARLKYGLSPDLSLLQKTIAAFNFPQPDFRLVTYFGQLMLDYQPNPYNLPPCQEQESAEPSPDVELLQALTHEVRTPLTSIRTLTKLLLRRKDLSPEVLKRIESIDRECSDQISRMDLIFRATELESTPLPELVVPLTVTSLEAVFQAGIPRWQKQAQRYNVNLQAQIPHSLPQVWSNPSLLDQVLGGMIEKFVRNFNGGGEINLQITTAGDQLKVQFHTQSVHQANPVRALGELLMFQPQTGCLSLNWDVTKNLFQLLGGKLIVRRRSPSEEILTIYLKCEQRTVPVANYDRQFTMV</sequence>
<accession>P74199</accession>
<dbReference type="EC" id="2.7.13.3" evidence="4"/>
<dbReference type="EMBL" id="BA000022">
    <property type="protein sequence ID" value="BAA18290.1"/>
    <property type="molecule type" value="Genomic_DNA"/>
</dbReference>
<dbReference type="PIR" id="S75831">
    <property type="entry name" value="S75831"/>
</dbReference>
<dbReference type="SMR" id="P74199"/>
<dbReference type="IntAct" id="P74199">
    <property type="interactions" value="5"/>
</dbReference>
<dbReference type="STRING" id="1148.gene:10499166"/>
<dbReference type="PaxDb" id="1148-1653376"/>
<dbReference type="EnsemblBacteria" id="BAA18290">
    <property type="protein sequence ID" value="BAA18290"/>
    <property type="gene ID" value="BAA18290"/>
</dbReference>
<dbReference type="KEGG" id="syn:slr1285"/>
<dbReference type="eggNOG" id="COG0642">
    <property type="taxonomic scope" value="Bacteria"/>
</dbReference>
<dbReference type="InParanoid" id="P74199"/>
<dbReference type="Proteomes" id="UP000001425">
    <property type="component" value="Chromosome"/>
</dbReference>
<dbReference type="GO" id="GO:0000155">
    <property type="term" value="F:phosphorelay sensor kinase activity"/>
    <property type="evidence" value="ECO:0007669"/>
    <property type="project" value="InterPro"/>
</dbReference>
<dbReference type="CDD" id="cd00082">
    <property type="entry name" value="HisKA"/>
    <property type="match status" value="1"/>
</dbReference>
<dbReference type="Gene3D" id="1.10.287.130">
    <property type="match status" value="1"/>
</dbReference>
<dbReference type="Gene3D" id="3.30.565.10">
    <property type="entry name" value="Histidine kinase-like ATPase, C-terminal domain"/>
    <property type="match status" value="1"/>
</dbReference>
<dbReference type="InterPro" id="IPR036890">
    <property type="entry name" value="HATPase_C_sf"/>
</dbReference>
<dbReference type="InterPro" id="IPR005467">
    <property type="entry name" value="His_kinase_dom"/>
</dbReference>
<dbReference type="InterPro" id="IPR003661">
    <property type="entry name" value="HisK_dim/P_dom"/>
</dbReference>
<dbReference type="InterPro" id="IPR036097">
    <property type="entry name" value="HisK_dim/P_sf"/>
</dbReference>
<dbReference type="PANTHER" id="PTHR43547:SF2">
    <property type="entry name" value="HYBRID SIGNAL TRANSDUCTION HISTIDINE KINASE C"/>
    <property type="match status" value="1"/>
</dbReference>
<dbReference type="PANTHER" id="PTHR43547">
    <property type="entry name" value="TWO-COMPONENT HISTIDINE KINASE"/>
    <property type="match status" value="1"/>
</dbReference>
<dbReference type="Pfam" id="PF00512">
    <property type="entry name" value="HisKA"/>
    <property type="match status" value="1"/>
</dbReference>
<dbReference type="SMART" id="SM00388">
    <property type="entry name" value="HisKA"/>
    <property type="match status" value="1"/>
</dbReference>
<dbReference type="SUPFAM" id="SSF47384">
    <property type="entry name" value="Homodimeric domain of signal transducing histidine kinase"/>
    <property type="match status" value="1"/>
</dbReference>
<dbReference type="PROSITE" id="PS50109">
    <property type="entry name" value="HIS_KIN"/>
    <property type="match status" value="1"/>
</dbReference>
<comment type="function">
    <text evidence="2 3 4 5 6">Member of a two-component system Hik34/Rre1, controlling expression of at least 20 genes in response to hyperosmotic stress (0.5 M sorbitol) or salt (0.5 M NaCl) (PubMed:15471853, PubMed:15805106, PubMed:19411329). Represses expression of heat shock genes under normal growth conditions (PubMed:15965020). Required for survival of long-term heat shock exposure (PubMed:25738257).</text>
</comment>
<comment type="catalytic activity">
    <reaction evidence="4">
        <text>ATP + protein L-histidine = ADP + protein N-phospho-L-histidine.</text>
        <dbReference type="EC" id="2.7.13.3"/>
    </reaction>
</comment>
<comment type="induction">
    <text evidence="4">Expression strongly induced by heat shock at 44 degrees Celsius for 20 minutes, after 60 minutes expression has fallen.</text>
</comment>
<comment type="PTM">
    <text evidence="4">When expressed in E.coli autophosphorylates at 18 to 30 degrees Celsius; less phosphorylation occurs at 36 and none occurs at 42 or 48 degrees Celsius.</text>
</comment>
<comment type="disruption phenotype">
    <text evidence="2 3 4 5 6">Loss or reduction of expression of about 20 genes in response to hyperosmotic stress (0.5 M sorbitol) or salt (0.5 M NaCl) stress (PubMed:15471853, PubMed:15805106, PubMed:19411329). Increased survival after heat shock from 30 to 48 degrees Celsius for 2-3 hours. Increased expression of some heat shock and photosystem-related proteins (PubMed:15965020). Cells die after 24 hours of heat shock (32 to 44 degrees Celsius). Increased expression of some heat shock proteins during normal growth (PubMed:25738257).</text>
</comment>
<gene>
    <name evidence="7" type="primary">hik34</name>
    <name evidence="8" type="ordered locus">slr1285</name>
</gene>
<reference key="1">
    <citation type="journal article" date="1996" name="DNA Res.">
        <title>Sequence analysis of the genome of the unicellular cyanobacterium Synechocystis sp. strain PCC6803. II. Sequence determination of the entire genome and assignment of potential protein-coding regions.</title>
        <authorList>
            <person name="Kaneko T."/>
            <person name="Sato S."/>
            <person name="Kotani H."/>
            <person name="Tanaka A."/>
            <person name="Asamizu E."/>
            <person name="Nakamura Y."/>
            <person name="Miyajima N."/>
            <person name="Hirosawa M."/>
            <person name="Sugiura M."/>
            <person name="Sasamoto S."/>
            <person name="Kimura T."/>
            <person name="Hosouchi T."/>
            <person name="Matsuno A."/>
            <person name="Muraki A."/>
            <person name="Nakazaki N."/>
            <person name="Naruo K."/>
            <person name="Okumura S."/>
            <person name="Shimpo S."/>
            <person name="Takeuchi C."/>
            <person name="Wada T."/>
            <person name="Watanabe A."/>
            <person name="Yamada M."/>
            <person name="Yasuda M."/>
            <person name="Tabata S."/>
        </authorList>
    </citation>
    <scope>NUCLEOTIDE SEQUENCE [LARGE SCALE GENOMIC DNA]</scope>
    <source>
        <strain>ATCC 27184 / PCC 6803 / Kazusa</strain>
    </source>
</reference>
<reference key="2">
    <citation type="journal article" date="2004" name="J. Biol. Chem.">
        <title>Five histidine kinases perceive osmotic stress and regulate distinct sets of genes in Synechocystis.</title>
        <authorList>
            <person name="Paithoonrangsarid K."/>
            <person name="Shoumskaya M.A."/>
            <person name="Kanesaki Y."/>
            <person name="Satoh S."/>
            <person name="Tabata S."/>
            <person name="Los D.A."/>
            <person name="Zinchenko V.V."/>
            <person name="Hayashi H."/>
            <person name="Tanticharoen M."/>
            <person name="Suzuki I."/>
            <person name="Murata N."/>
        </authorList>
    </citation>
    <scope>FUNCTION IN HYPEROSMOTIC STRESS RESPONSE</scope>
    <scope>REGULON</scope>
    <scope>DISRUPTION PHENOTYPE</scope>
    <source>
        <strain>ATCC 27184 / PCC 6803 / Kazusa</strain>
    </source>
</reference>
<reference key="3">
    <citation type="journal article" date="2005" name="J. Biol. Chem.">
        <title>Identical Hik-Rre systems are involved in perception and transduction of salt signals and hyperosmotic signals but regulate the expression of individual genes to different extents in synechocystis.</title>
        <authorList>
            <person name="Shoumskaya M.A."/>
            <person name="Paithoonrangsarid K."/>
            <person name="Kanesaki Y."/>
            <person name="Los D.A."/>
            <person name="Zinchenko V.V."/>
            <person name="Tanticharoen M."/>
            <person name="Suzuki I."/>
            <person name="Murata N."/>
        </authorList>
    </citation>
    <scope>FUNCTION IN SALT STRESS RESPONSE</scope>
    <scope>REGULON</scope>
    <scope>DISRUPTION PHENOTYPE</scope>
    <source>
        <strain>ATCC 27184 / PCC 6803 / Kazusa</strain>
    </source>
</reference>
<reference key="4">
    <citation type="journal article" date="2005" name="Plant Physiol.">
        <title>The histidine kinase Hik34 is involved in thermotolerance by regulating the expression of heat shock genes in synechocystis.</title>
        <authorList>
            <person name="Suzuki I."/>
            <person name="Kanesaki Y."/>
            <person name="Hayashi H."/>
            <person name="Hall J.J."/>
            <person name="Simon W.J."/>
            <person name="Slabas A.R."/>
            <person name="Murata N."/>
        </authorList>
    </citation>
    <scope>FUNCTION IN HEAT SHOCK RESPONSE</scope>
    <scope>REGULON</scope>
    <scope>CATALYTIC ACTIVITY</scope>
    <scope>INDUCTION</scope>
    <scope>AUTOPHOSPHORYLATION</scope>
    <scope>DISRUPTION PHENOTYPE</scope>
    <source>
        <strain>ATCC 27184 / PCC 6803 / Kazusa</strain>
    </source>
</reference>
<reference key="5">
    <citation type="journal article" date="2009" name="J. Bacteriol.">
        <title>Characterization of an alcohol dehydrogenase from the Cyanobacterium Synechocystis sp. strain PCC 6803 that responds to environmental stress conditions via the Hik34-Rre1 two-component system.</title>
        <authorList>
            <person name="Vidal R."/>
            <person name="Lopez-Maury L."/>
            <person name="Guerrero M.G."/>
            <person name="Florencio F.J."/>
        </authorList>
    </citation>
    <scope>FUNCTION</scope>
    <scope>DISRUPTION PHENOTYPE</scope>
    <source>
        <strain>ATCC 27184 / PCC 6803 / Kazusa</strain>
    </source>
</reference>
<reference key="6">
    <citation type="journal article" date="2015" name="Life">
        <title>Mechanisms of High Temperature Resistance of Synechocystis sp. PCC 6803: An Impact of Histidine Kinase 34.</title>
        <authorList>
            <person name="Cerveny J."/>
            <person name="Sinetova M.A."/>
            <person name="Zavrel T."/>
            <person name="Los D.A."/>
        </authorList>
    </citation>
    <scope>FUNCTION</scope>
    <scope>DISRUPTION PHENOTYPE</scope>
    <source>
        <strain>ATCC 27184 / PCC 6803 / Kazusa</strain>
    </source>
</reference>
<protein>
    <recommendedName>
        <fullName evidence="7">Sensor histidine kinase Hik34</fullName>
        <ecNumber evidence="4">2.7.13.3</ecNumber>
    </recommendedName>
</protein>
<organism>
    <name type="scientific">Synechocystis sp. (strain ATCC 27184 / PCC 6803 / Kazusa)</name>
    <dbReference type="NCBI Taxonomy" id="1111708"/>
    <lineage>
        <taxon>Bacteria</taxon>
        <taxon>Bacillati</taxon>
        <taxon>Cyanobacteriota</taxon>
        <taxon>Cyanophyceae</taxon>
        <taxon>Synechococcales</taxon>
        <taxon>Merismopediaceae</taxon>
        <taxon>Synechocystis</taxon>
    </lineage>
</organism>
<name>HIK34_SYNY3</name>